<proteinExistence type="evidence at protein level"/>
<reference key="1">
    <citation type="journal article" date="1993" name="Nature">
        <title>A new subunit of the cyclic nucleotide-gated cation channel in retinal rods.</title>
        <authorList>
            <person name="Chen T.-Y."/>
            <person name="Peng Y.-W."/>
            <person name="Dhallan R.S."/>
            <person name="Ahamed B."/>
            <person name="Reed R.R."/>
            <person name="Yau K.-W."/>
        </authorList>
    </citation>
    <scope>NUCLEOTIDE SEQUENCE [GENOMIC DNA] (ISOFORMS RCNC2A AND RCNC2B)</scope>
    <source>
        <tissue>Retina</tissue>
    </source>
</reference>
<reference key="2">
    <citation type="journal article" date="1995" name="Genomics">
        <title>cDNA, gene structure, and chromosomal localization of human GAR1 (CNCG3L), a homolog of the third subunit of bovine photoreceptor cGMP-gated channel.</title>
        <authorList>
            <person name="Ardell M.D."/>
            <person name="Makhija A.K."/>
            <person name="Oliveira L."/>
            <person name="Miniou P."/>
            <person name="Viegas-Pequignot E."/>
            <person name="Pittler S.J."/>
        </authorList>
    </citation>
    <scope>NUCLEOTIDE SEQUENCE [MRNA] (ISOFORM GARP2)</scope>
    <scope>VARIANT HIS-100</scope>
    <source>
        <tissue>Retina</tissue>
    </source>
</reference>
<reference key="3">
    <citation type="journal article" date="1996" name="FEBS Lett.">
        <title>The beta subunit of human rod photoreceptor cGMP-gated cation channel is generated from a complex transcription unit.</title>
        <authorList>
            <person name="Ardell M.D."/>
            <person name="Aragon I."/>
            <person name="Oliveira L."/>
            <person name="Porche G.E."/>
            <person name="Burke E."/>
            <person name="Pittler S.J."/>
        </authorList>
    </citation>
    <scope>NUCLEOTIDE SEQUENCE [MRNA] (ISOFORM RCNC2B)</scope>
    <scope>VARIANT HIS-100</scope>
    <source>
        <tissue>Retina</tissue>
    </source>
</reference>
<reference key="4">
    <citation type="journal article" date="1998" name="J. Biol. Chem.">
        <title>Identification of a domain on the beta-subunit of the rod cGMP-gated cation channel that mediates inhibition by calcium-calmodulin.</title>
        <authorList>
            <person name="Grunwald M.E."/>
            <person name="Yu W.P."/>
            <person name="Yu H.H."/>
            <person name="Yau K.W."/>
        </authorList>
    </citation>
    <scope>NUCLEOTIDE SEQUENCE [MRNA] (ISOFORM RCNC2B)</scope>
    <scope>VARIANT HIS-100</scope>
    <source>
        <tissue>Retina</tissue>
    </source>
</reference>
<reference key="5">
    <citation type="journal article" date="2004" name="Nature">
        <title>The sequence and analysis of duplication-rich human chromosome 16.</title>
        <authorList>
            <person name="Martin J."/>
            <person name="Han C."/>
            <person name="Gordon L.A."/>
            <person name="Terry A."/>
            <person name="Prabhakar S."/>
            <person name="She X."/>
            <person name="Xie G."/>
            <person name="Hellsten U."/>
            <person name="Chan Y.M."/>
            <person name="Altherr M."/>
            <person name="Couronne O."/>
            <person name="Aerts A."/>
            <person name="Bajorek E."/>
            <person name="Black S."/>
            <person name="Blumer H."/>
            <person name="Branscomb E."/>
            <person name="Brown N.C."/>
            <person name="Bruno W.J."/>
            <person name="Buckingham J.M."/>
            <person name="Callen D.F."/>
            <person name="Campbell C.S."/>
            <person name="Campbell M.L."/>
            <person name="Campbell E.W."/>
            <person name="Caoile C."/>
            <person name="Challacombe J.F."/>
            <person name="Chasteen L.A."/>
            <person name="Chertkov O."/>
            <person name="Chi H.C."/>
            <person name="Christensen M."/>
            <person name="Clark L.M."/>
            <person name="Cohn J.D."/>
            <person name="Denys M."/>
            <person name="Detter J.C."/>
            <person name="Dickson M."/>
            <person name="Dimitrijevic-Bussod M."/>
            <person name="Escobar J."/>
            <person name="Fawcett J.J."/>
            <person name="Flowers D."/>
            <person name="Fotopulos D."/>
            <person name="Glavina T."/>
            <person name="Gomez M."/>
            <person name="Gonzales E."/>
            <person name="Goodstein D."/>
            <person name="Goodwin L.A."/>
            <person name="Grady D.L."/>
            <person name="Grigoriev I."/>
            <person name="Groza M."/>
            <person name="Hammon N."/>
            <person name="Hawkins T."/>
            <person name="Haydu L."/>
            <person name="Hildebrand C.E."/>
            <person name="Huang W."/>
            <person name="Israni S."/>
            <person name="Jett J."/>
            <person name="Jewett P.B."/>
            <person name="Kadner K."/>
            <person name="Kimball H."/>
            <person name="Kobayashi A."/>
            <person name="Krawczyk M.-C."/>
            <person name="Leyba T."/>
            <person name="Longmire J.L."/>
            <person name="Lopez F."/>
            <person name="Lou Y."/>
            <person name="Lowry S."/>
            <person name="Ludeman T."/>
            <person name="Manohar C.F."/>
            <person name="Mark G.A."/>
            <person name="McMurray K.L."/>
            <person name="Meincke L.J."/>
            <person name="Morgan J."/>
            <person name="Moyzis R.K."/>
            <person name="Mundt M.O."/>
            <person name="Munk A.C."/>
            <person name="Nandkeshwar R.D."/>
            <person name="Pitluck S."/>
            <person name="Pollard M."/>
            <person name="Predki P."/>
            <person name="Parson-Quintana B."/>
            <person name="Ramirez L."/>
            <person name="Rash S."/>
            <person name="Retterer J."/>
            <person name="Ricke D.O."/>
            <person name="Robinson D.L."/>
            <person name="Rodriguez A."/>
            <person name="Salamov A."/>
            <person name="Saunders E.H."/>
            <person name="Scott D."/>
            <person name="Shough T."/>
            <person name="Stallings R.L."/>
            <person name="Stalvey M."/>
            <person name="Sutherland R.D."/>
            <person name="Tapia R."/>
            <person name="Tesmer J.G."/>
            <person name="Thayer N."/>
            <person name="Thompson L.S."/>
            <person name="Tice H."/>
            <person name="Torney D.C."/>
            <person name="Tran-Gyamfi M."/>
            <person name="Tsai M."/>
            <person name="Ulanovsky L.E."/>
            <person name="Ustaszewska A."/>
            <person name="Vo N."/>
            <person name="White P.S."/>
            <person name="Williams A.L."/>
            <person name="Wills P.L."/>
            <person name="Wu J.-R."/>
            <person name="Wu K."/>
            <person name="Yang J."/>
            <person name="DeJong P."/>
            <person name="Bruce D."/>
            <person name="Doggett N.A."/>
            <person name="Deaven L."/>
            <person name="Schmutz J."/>
            <person name="Grimwood J."/>
            <person name="Richardson P."/>
            <person name="Rokhsar D.S."/>
            <person name="Eichler E.E."/>
            <person name="Gilna P."/>
            <person name="Lucas S.M."/>
            <person name="Myers R.M."/>
            <person name="Rubin E.M."/>
            <person name="Pennacchio L.A."/>
        </authorList>
    </citation>
    <scope>NUCLEOTIDE SEQUENCE [LARGE SCALE GENOMIC DNA]</scope>
</reference>
<reference key="6">
    <citation type="submission" date="2005-07" db="EMBL/GenBank/DDBJ databases">
        <authorList>
            <person name="Mural R.J."/>
            <person name="Istrail S."/>
            <person name="Sutton G."/>
            <person name="Florea L."/>
            <person name="Halpern A.L."/>
            <person name="Mobarry C.M."/>
            <person name="Lippert R."/>
            <person name="Walenz B."/>
            <person name="Shatkay H."/>
            <person name="Dew I."/>
            <person name="Miller J.R."/>
            <person name="Flanigan M.J."/>
            <person name="Edwards N.J."/>
            <person name="Bolanos R."/>
            <person name="Fasulo D."/>
            <person name="Halldorsson B.V."/>
            <person name="Hannenhalli S."/>
            <person name="Turner R."/>
            <person name="Yooseph S."/>
            <person name="Lu F."/>
            <person name="Nusskern D.R."/>
            <person name="Shue B.C."/>
            <person name="Zheng X.H."/>
            <person name="Zhong F."/>
            <person name="Delcher A.L."/>
            <person name="Huson D.H."/>
            <person name="Kravitz S.A."/>
            <person name="Mouchard L."/>
            <person name="Reinert K."/>
            <person name="Remington K.A."/>
            <person name="Clark A.G."/>
            <person name="Waterman M.S."/>
            <person name="Eichler E.E."/>
            <person name="Adams M.D."/>
            <person name="Hunkapiller M.W."/>
            <person name="Myers E.W."/>
            <person name="Venter J.C."/>
        </authorList>
    </citation>
    <scope>NUCLEOTIDE SEQUENCE [LARGE SCALE GENOMIC DNA]</scope>
</reference>
<reference key="7">
    <citation type="journal article" date="2000" name="Gene">
        <title>Genomic organization of the human rod photoreceptor cGMP-gated cation channel beta-subunit gene.</title>
        <authorList>
            <person name="Ardell M.D."/>
            <person name="Bedsole D.L."/>
            <person name="Schoborg R.V."/>
            <person name="Pittler S.J."/>
        </authorList>
    </citation>
    <scope>ALTERNATIVE SPLICING</scope>
</reference>
<reference key="8">
    <citation type="journal article" date="2001" name="Science">
        <title>Nomenclature for ion channel subunits.</title>
        <authorList>
            <person name="Bradley J."/>
            <person name="Frings S."/>
            <person name="Yau K.W."/>
            <person name="Reed R."/>
        </authorList>
    </citation>
    <scope>NOMENCLATURE</scope>
</reference>
<reference key="9">
    <citation type="journal article" date="2004" name="Nat. Neurosci.">
        <title>Calmodulin permanently associates with rat olfactory CNG channels under native conditions.</title>
        <authorList>
            <person name="Bradley J."/>
            <person name="Boenigk W."/>
            <person name="Yau K.-W."/>
            <person name="Frings S."/>
        </authorList>
    </citation>
    <scope>MUTAGENESIS OF LEU-568</scope>
</reference>
<reference key="10">
    <citation type="journal article" date="2006" name="J. Biol. Chem.">
        <title>The glutamic acid-rich protein-2 (GARP2) is a high affinity rod photoreceptor phosphodiesterase (PDE6)-binding protein that modulates its catalytic properties.</title>
        <authorList>
            <person name="Pentia D.C."/>
            <person name="Hosier S."/>
            <person name="Cote R.H."/>
        </authorList>
    </citation>
    <scope>ALTERNATIVE SPLICING (ISOFORM GARP2)</scope>
    <scope>FUNCTION (ISOFORM GARP2)</scope>
</reference>
<reference key="11">
    <citation type="journal article" date="2006" name="J. Biol. Chem.">
        <title>Glutamic acid-rich proteins of rod photoreceptors are natively unfolded.</title>
        <authorList>
            <person name="Batra-Safferling R."/>
            <person name="Abarca-Heidemann K."/>
            <person name="Korschen H.G."/>
            <person name="Tziatzios C."/>
            <person name="Stoldt M."/>
            <person name="Budyak I."/>
            <person name="Willbold D."/>
            <person name="Schwalbe H."/>
            <person name="Klein-Seetharaman J."/>
            <person name="Kaupp U.B."/>
        </authorList>
    </citation>
    <scope>CHARACTERIZATION OF THE GARPS PROTEINS</scope>
</reference>
<reference key="12">
    <citation type="unpublished observations" date="2009-05">
        <authorList>
            <person name="Cote R.H."/>
        </authorList>
    </citation>
    <scope>ALTERNATIVE SPLICING (ISOFORM GARP2)</scope>
</reference>
<reference key="13">
    <citation type="journal article" date="2022" name="Neuron">
        <title>Structural mechanisms of assembly, permeation, gating, and pharmacology of native human rod CNG channel.</title>
        <authorList>
            <person name="Xue J."/>
            <person name="Han Y."/>
            <person name="Zeng W."/>
            <person name="Jiang Y."/>
        </authorList>
    </citation>
    <scope>STRUCTURE BY ELECTRON MICROSCOPY (2.61 ANGSTROMS) OF 454-1251 IN COMPLEX WITH 3',5'-CYCLIC GMP AND 3',5'-CYCLIC AMP</scope>
    <scope>FUNCTION</scope>
    <scope>SUBUNIT</scope>
    <scope>DOMAIN</scope>
    <scope>TOPOLOGY</scope>
    <scope>MUTAGENESIS OF GLY-848 AND ARG-880</scope>
</reference>
<reference key="14">
    <citation type="journal article" date="2001" name="Hum. Genet.">
        <title>Segregation of a mutation in CNGB1 encoding the beta-subunit of the rod cGMP-gated channel in a family with autosomal recessive retinitis pigmentosa.</title>
        <authorList>
            <person name="Bareil C."/>
            <person name="Hamel C.P."/>
            <person name="Delague V."/>
            <person name="Arnaud B."/>
            <person name="Demaille J."/>
            <person name="Claustres M."/>
        </authorList>
    </citation>
    <scope>VARIANT RP45 VAL-993</scope>
</reference>
<reference key="15">
    <citation type="journal article" date="2013" name="Mol. Vis.">
        <title>Homozygosity mapping in autosomal recessive retinitis pigmentosa families detects novel mutations.</title>
        <authorList>
            <person name="Bocquet B."/>
            <person name="Marzouka N.A."/>
            <person name="Hebrard M."/>
            <person name="Manes G."/>
            <person name="Senechal A."/>
            <person name="Meunier I."/>
            <person name="Hamel C.P."/>
        </authorList>
    </citation>
    <scope>INVOLVEMENT IN RP45</scope>
    <scope>VARIANT RP45 CYS-762</scope>
</reference>
<reference key="16">
    <citation type="journal article" date="2017" name="JAMA Ophthalmol.">
        <title>Clinical Characterization of CNGB1-Related Autosomal Recessive Retinitis Pigmentosa.</title>
        <authorList>
            <person name="Hull S."/>
            <person name="Attanasio M."/>
            <person name="Arno G."/>
            <person name="Carss K."/>
            <person name="Robson A.G."/>
            <person name="Thompson D.A."/>
            <person name="Plagnol V."/>
            <person name="Michaelides M."/>
            <person name="Holder G.E."/>
            <person name="Henderson R.H."/>
            <person name="Raymond F.L."/>
            <person name="Moore A.T."/>
            <person name="Webster A.R."/>
        </authorList>
    </citation>
    <scope>INVOLVEMENT IN RP45</scope>
    <scope>VARIANTS RP45 88-GLN--GLU-1251 DEL; 222-GLN--GLU-1251 DEL; 318-GLN--GLU-1251 DEL; 729-ARG--GLU-1251 DEL AND ILE-986</scope>
</reference>
<reference key="17">
    <citation type="journal article" date="2018" name="JAMA Ophthalmol.">
        <title>Olfactory Dysfunction in Patients With CNGB1-Associated Retinitis Pigmentosa.</title>
        <authorList>
            <person name="Charbel Issa P."/>
            <person name="Reuter P."/>
            <person name="Kuehlewein L."/>
            <person name="Birtel J."/>
            <person name="Gliem M."/>
            <person name="Tropitzsch A."/>
            <person name="Whitcroft K.L."/>
            <person name="Bolz H.J."/>
            <person name="Ishihara K."/>
            <person name="MacLaren R.E."/>
            <person name="Downes S.M."/>
            <person name="Oishi A."/>
            <person name="Zrenner E."/>
            <person name="Kohl S."/>
            <person name="Hummel T."/>
        </authorList>
    </citation>
    <scope>INVOLVEMENT IN RP45</scope>
    <scope>VARIANTS RP45 438-GLN--GLU-1251 DEL; HIS-737; CYS-762; 921-TYR--GLU-1251 DEL AND ILE-986</scope>
</reference>
<name>CNGB1_HUMAN</name>
<sequence length="1251" mass="139678">MLGWVQRVLPQPPGTPRKTKMQEEEEVEPEPEMEAEVEPEPNPEEAETESESMPPEESFKEEEVAVADPSPQETKEAALTSTISLRAQGAEISEMNSPSRRVLTWLMKGVEKVIPQPVHSITEDPAQILGHGSTGDTGCTDEPNEALEAQDTRPGLRLLLWLEQNLERVLPQPPKSSEVWRDEPAVATGAASDPAPPGRPQEMGPKLQARETPSLPTPIPLQPKEEPKEAPAPEPQPGSQAQTSSLPPTRDPARLVAWVLHRLEMALPQPVLHGKIGEQEPDSPGICDVQTISILPGGQVEPDLVLEEVEPPWEDAHQDVSTSPQGTEVVPAYEEENKAVEKMPRELSRIEEEKEDEEEEEEEEEEEEEEEVTEVLLDSCVVSQVGVGQSEEDGTRPQSTSDQKLWEEVGEEAKKEAEEKAKEEAEEVAEEEAEKEPQDWAETKEEPEAEAEAASSGVPATKQHPEVQVEDTDADSCPLMAEENPPSTVLPPPSPAKSDTLIVPSSASGTHRKKLPSEDDEAEELKALSPAESPVVAWSDPTTPKDTDGQDRAASTASTNSAIINDRLQELVKLFKERTEKVKEKLIDPDVTSDEESPKPSPAKKAPEPAPDTKPAEAEPVEEEHYCDMLCCKFKHRPWKKYQFPQSIDPLTNLMYVLWLFFVVMAWNWNCWLIPVRWAFPYQTPDNIHHWLLMDYLCDLIYFLDITVFQTRLQFVRGGDIITDKKDMRNNYLKSRRFKMDLLSLLPLDFLYLKVGVNPLLRLPRCLKYMAFFEFNSRLESILSKAYVYRVIRTTAYLLYSLHLNSCLYYWASAYQGLGSTHWVYDGVGNSYIRCYYFAVKTLITIGGLPDPKTLFEIVFQLLNYFTGVFAFSVMIGQMRDVVGAATAGQTYYRSCMDSTVKYMNFYKIPKSVQNRVKTWYEYTWHSQGMLDESELMVQLPDKMRLDLAIDVNYNIVSKVALFQGCDRQMIFDMLKRLRSVVYLPNDYVCKKGEIGREMYIIQAGQVQVLGGPDGKSVLVTLKAGSVFGEISLLAVGGGNRRTANVVAHGFTNLFILDKKDLNEILVHYPESQKLLRKKARRMLRSNNKPKEEKSVLILPPRAGTPKLFNAALAMTGKMGGKGAKGGKLAHLRARLKELAALEAAAKQQELVEQAKSSQDVKGEEGSAAPDQHTHPKEAATDPPAPRTPPEPPGSPPSSPPPASLGRPEGEEEGPAEPEEHSVRICMSPGPEPGEQILSVKMPEEREEKAE</sequence>
<keyword id="KW-0002">3D-structure</keyword>
<keyword id="KW-0025">Alternative splicing</keyword>
<keyword id="KW-0106">Calcium</keyword>
<keyword id="KW-0107">Calcium channel</keyword>
<keyword id="KW-0109">Calcium transport</keyword>
<keyword id="KW-0114">cAMP</keyword>
<keyword id="KW-0116">cAMP-binding</keyword>
<keyword id="KW-1003">Cell membrane</keyword>
<keyword id="KW-0966">Cell projection</keyword>
<keyword id="KW-0140">cGMP</keyword>
<keyword id="KW-0142">cGMP-binding</keyword>
<keyword id="KW-0225">Disease variant</keyword>
<keyword id="KW-0407">Ion channel</keyword>
<keyword id="KW-0406">Ion transport</keyword>
<keyword id="KW-1071">Ligand-gated ion channel</keyword>
<keyword id="KW-0472">Membrane</keyword>
<keyword id="KW-0547">Nucleotide-binding</keyword>
<keyword id="KW-0552">Olfaction</keyword>
<keyword id="KW-1267">Proteomics identification</keyword>
<keyword id="KW-1185">Reference proteome</keyword>
<keyword id="KW-0682">Retinitis pigmentosa</keyword>
<keyword id="KW-0716">Sensory transduction</keyword>
<keyword id="KW-0915">Sodium</keyword>
<keyword id="KW-0894">Sodium channel</keyword>
<keyword id="KW-0739">Sodium transport</keyword>
<keyword id="KW-0812">Transmembrane</keyword>
<keyword id="KW-1133">Transmembrane helix</keyword>
<keyword id="KW-0813">Transport</keyword>
<keyword id="KW-0844">Vision</keyword>
<feature type="chain" id="PRO_0000219323" description="Cyclic nucleotide-gated channel beta-1">
    <location>
        <begin position="1"/>
        <end position="1251"/>
    </location>
</feature>
<feature type="topological domain" description="Cytoplasmic" evidence="20">
    <location>
        <begin position="1"/>
        <end position="656"/>
    </location>
</feature>
<feature type="transmembrane region" description="Helical; Name=S1" evidence="13 22">
    <location>
        <begin position="657"/>
        <end position="678"/>
    </location>
</feature>
<feature type="topological domain" description="Extracellular" evidence="20">
    <location>
        <begin position="679"/>
        <end position="687"/>
    </location>
</feature>
<feature type="transmembrane region" description="Helical; Name=S2" evidence="13 22">
    <location>
        <begin position="688"/>
        <end position="709"/>
    </location>
</feature>
<feature type="topological domain" description="Cytoplasmic" evidence="20">
    <location>
        <begin position="710"/>
        <end position="724"/>
    </location>
</feature>
<feature type="transmembrane region" description="Helical; Name=S3" evidence="13 22">
    <location>
        <begin position="725"/>
        <end position="744"/>
    </location>
</feature>
<feature type="topological domain" description="Extracellular" evidence="20">
    <location>
        <begin position="745"/>
        <end position="760"/>
    </location>
</feature>
<feature type="transmembrane region" description="Helical; Name=S4" evidence="13 22">
    <location>
        <begin position="761"/>
        <end position="773"/>
    </location>
</feature>
<feature type="topological domain" description="Cytoplasmic" evidence="20">
    <location>
        <begin position="774"/>
        <end position="785"/>
    </location>
</feature>
<feature type="transmembrane region" description="Helical; Name=S5" evidence="13 22">
    <location>
        <begin position="786"/>
        <end position="808"/>
    </location>
</feature>
<feature type="topological domain" description="Extracellular" evidence="20">
    <location>
        <begin position="809"/>
        <end position="831"/>
    </location>
</feature>
<feature type="transmembrane region" description="Helical; Name=P-helix" evidence="13 22">
    <location>
        <begin position="832"/>
        <end position="858"/>
    </location>
</feature>
<feature type="transmembrane region" description="Helical; Name=S6" evidence="13 22">
    <location>
        <begin position="859"/>
        <end position="884"/>
    </location>
</feature>
<feature type="topological domain" description="Cytoplasmic" evidence="20">
    <location>
        <begin position="885"/>
        <end position="1251"/>
    </location>
</feature>
<feature type="region of interest" description="Disordered" evidence="6">
    <location>
        <begin position="1"/>
        <end position="75"/>
    </location>
</feature>
<feature type="region of interest" description="Disordered" evidence="6">
    <location>
        <begin position="121"/>
        <end position="151"/>
    </location>
</feature>
<feature type="region of interest" description="Disordered" evidence="6">
    <location>
        <begin position="172"/>
        <end position="252"/>
    </location>
</feature>
<feature type="region of interest" description="Disordered" evidence="6">
    <location>
        <begin position="314"/>
        <end position="561"/>
    </location>
</feature>
<feature type="region of interest" description="Calmodulin-binding CaM1" evidence="3">
    <location>
        <begin position="557"/>
        <end position="567"/>
    </location>
</feature>
<feature type="region of interest" description="Disordered" evidence="6">
    <location>
        <begin position="585"/>
        <end position="619"/>
    </location>
</feature>
<feature type="region of interest" description="Ion conduction pathway" evidence="21">
    <location>
        <begin position="786"/>
        <end position="885"/>
    </location>
</feature>
<feature type="region of interest" description="C-linker" evidence="21">
    <location>
        <begin position="888"/>
        <end position="964"/>
    </location>
</feature>
<feature type="region of interest" description="Cyclic nucleotide-binding domain" evidence="21 25">
    <location>
        <begin position="968"/>
        <end position="1084"/>
    </location>
</feature>
<feature type="region of interest" description="Calmodulin-binding CaM2" evidence="3">
    <location>
        <begin position="1148"/>
        <end position="1154"/>
    </location>
</feature>
<feature type="region of interest" description="Disordered" evidence="6">
    <location>
        <begin position="1151"/>
        <end position="1251"/>
    </location>
</feature>
<feature type="short sequence motif" description="IQ-like">
    <location>
        <begin position="568"/>
        <end position="578"/>
    </location>
</feature>
<feature type="compositionally biased region" description="Acidic residues" evidence="6">
    <location>
        <begin position="23"/>
        <end position="50"/>
    </location>
</feature>
<feature type="compositionally biased region" description="Polar residues" evidence="6">
    <location>
        <begin position="238"/>
        <end position="247"/>
    </location>
</feature>
<feature type="compositionally biased region" description="Basic and acidic residues" evidence="6">
    <location>
        <begin position="335"/>
        <end position="352"/>
    </location>
</feature>
<feature type="compositionally biased region" description="Acidic residues" evidence="6">
    <location>
        <begin position="353"/>
        <end position="373"/>
    </location>
</feature>
<feature type="compositionally biased region" description="Basic and acidic residues" evidence="6">
    <location>
        <begin position="404"/>
        <end position="423"/>
    </location>
</feature>
<feature type="compositionally biased region" description="Acidic residues" evidence="6">
    <location>
        <begin position="424"/>
        <end position="434"/>
    </location>
</feature>
<feature type="compositionally biased region" description="Basic and acidic residues" evidence="6">
    <location>
        <begin position="435"/>
        <end position="446"/>
    </location>
</feature>
<feature type="compositionally biased region" description="Pro residues" evidence="6">
    <location>
        <begin position="1183"/>
        <end position="1203"/>
    </location>
</feature>
<feature type="compositionally biased region" description="Basic and acidic residues" evidence="6">
    <location>
        <begin position="1242"/>
        <end position="1251"/>
    </location>
</feature>
<feature type="binding site" evidence="13 25">
    <location>
        <position position="1029"/>
    </location>
    <ligand>
        <name>3',5'-cyclic GMP</name>
        <dbReference type="ChEBI" id="CHEBI:57746"/>
    </ligand>
</feature>
<feature type="binding site" evidence="13 25">
    <location>
        <position position="1030"/>
    </location>
    <ligand>
        <name>3',5'-cyclic GMP</name>
        <dbReference type="ChEBI" id="CHEBI:57746"/>
    </ligand>
</feature>
<feature type="binding site" evidence="13 25">
    <location>
        <position position="1032"/>
    </location>
    <ligand>
        <name>3',5'-cyclic GMP</name>
        <dbReference type="ChEBI" id="CHEBI:57746"/>
    </ligand>
</feature>
<feature type="binding site" evidence="13 23">
    <location>
        <position position="1042"/>
    </location>
    <ligand>
        <name>3',5'-cyclic AMP</name>
        <dbReference type="ChEBI" id="CHEBI:58165"/>
    </ligand>
</feature>
<feature type="binding site" evidence="13 24">
    <location>
        <position position="1042"/>
    </location>
    <ligand>
        <name>3',5'-cyclic GMP</name>
        <dbReference type="ChEBI" id="CHEBI:57746"/>
    </ligand>
</feature>
<feature type="binding site" evidence="13 24 25">
    <location>
        <position position="1043"/>
    </location>
    <ligand>
        <name>3',5'-cyclic GMP</name>
        <dbReference type="ChEBI" id="CHEBI:57746"/>
    </ligand>
</feature>
<feature type="site" description="Central gate" evidence="21">
    <location>
        <position position="872"/>
    </location>
</feature>
<feature type="site" description="Central gate" evidence="21">
    <location>
        <position position="876"/>
    </location>
</feature>
<feature type="site" description="Occludes the pore below the central gate" evidence="21">
    <location>
        <position position="880"/>
    </location>
</feature>
<feature type="splice variant" id="VSP_001110" description="In isoform RCNC2A." evidence="20">
    <location>
        <begin position="1"/>
        <end position="628"/>
    </location>
</feature>
<feature type="splice variant" id="VSP_053421" description="In isoform 4." evidence="20">
    <location>
        <begin position="189"/>
        <end position="194"/>
    </location>
</feature>
<feature type="splice variant" id="VSP_037921" description="In isoform GARP2." evidence="19">
    <original>ISILPGGQ</original>
    <variation>RVMGAGGL</variation>
    <location>
        <begin position="292"/>
        <end position="299"/>
    </location>
</feature>
<feature type="splice variant" id="VSP_037922" description="In isoform GARP2." evidence="19">
    <location>
        <begin position="300"/>
        <end position="1251"/>
    </location>
</feature>
<feature type="sequence variant" id="VAR_089116" description="In RP45; pathogenic." evidence="11">
    <location>
        <begin position="88"/>
        <end position="1251"/>
    </location>
</feature>
<feature type="sequence variant" id="VAR_058691" description="In dbSNP:rs13336595." evidence="14 15 16">
    <original>R</original>
    <variation>H</variation>
    <location>
        <position position="100"/>
    </location>
</feature>
<feature type="sequence variant" id="VAR_089117" description="In RP45; pathogenic." evidence="11">
    <location>
        <begin position="222"/>
        <end position="1251"/>
    </location>
</feature>
<feature type="sequence variant" id="VAR_089118" description="In RP45; pathogenic." evidence="11">
    <location>
        <begin position="318"/>
        <end position="1251"/>
    </location>
</feature>
<feature type="sequence variant" id="VAR_089026" description="In RP45; pathogenic." evidence="12">
    <location>
        <begin position="438"/>
        <end position="1251"/>
    </location>
</feature>
<feature type="sequence variant" id="VAR_059225" description="In dbSNP:rs2303783.">
    <original>L</original>
    <variation>I</variation>
    <location>
        <position position="479"/>
    </location>
</feature>
<feature type="sequence variant" id="VAR_059226" description="In dbSNP:rs12927214.">
    <original>V</original>
    <variation>A</variation>
    <location>
        <position position="535"/>
    </location>
</feature>
<feature type="sequence variant" id="VAR_089119" description="In RP45; pathogenic." evidence="11">
    <location>
        <begin position="729"/>
        <end position="1251"/>
    </location>
</feature>
<feature type="sequence variant" id="VAR_059227" description="In dbSNP:rs376270.">
    <original>N</original>
    <variation>K</variation>
    <location>
        <position position="731"/>
    </location>
</feature>
<feature type="sequence variant" id="VAR_089027" description="In RP45; uncertain significance; dbSNP:rs764107600." evidence="12">
    <original>R</original>
    <variation>H</variation>
    <location>
        <position position="737"/>
    </location>
</feature>
<feature type="sequence variant" id="VAR_059228" description="In dbSNP:rs10459809.">
    <original>L</original>
    <variation>I</variation>
    <location>
        <position position="745"/>
    </location>
</feature>
<feature type="sequence variant" id="VAR_089028" description="In RP45; likely pathogenic; dbSNP:rs1028371920." evidence="10 12">
    <original>R</original>
    <variation>C</variation>
    <location>
        <position position="762"/>
    </location>
</feature>
<feature type="sequence variant" id="VAR_059229" description="In dbSNP:rs2303785.">
    <original>K</original>
    <variation>R</variation>
    <location>
        <position position="911"/>
    </location>
</feature>
<feature type="sequence variant" id="VAR_089029" description="In RP45; pathogenic." evidence="12">
    <location>
        <begin position="921"/>
        <end position="1251"/>
    </location>
</feature>
<feature type="sequence variant" id="VAR_059230" description="In dbSNP:rs16942445.">
    <original>A</original>
    <variation>S</variation>
    <location>
        <position position="961"/>
    </location>
</feature>
<feature type="sequence variant" id="VAR_089030" description="In RP45; likely pathogenic; dbSNP:rs201162411." evidence="11 12">
    <original>N</original>
    <variation>I</variation>
    <location>
        <position position="986"/>
    </location>
</feature>
<feature type="sequence variant" id="VAR_060491" description="In RP45; dbSNP:rs121918532." evidence="7">
    <original>G</original>
    <variation>V</variation>
    <location>
        <position position="993"/>
    </location>
</feature>
<feature type="mutagenesis site" description="Loss of calcium/calmodulin modulation." evidence="8">
    <original>L</original>
    <variation>E</variation>
    <location>
        <position position="568"/>
    </location>
</feature>
<feature type="mutagenesis site" description="Increases the affinity to Ca(2+) ions. Does not affect heterotetrameric channel assembly." evidence="13">
    <original>G</original>
    <variation>E</variation>
    <location>
        <position position="848"/>
    </location>
</feature>
<feature type="mutagenesis site" description="Increases channel conductance." evidence="13">
    <original>R</original>
    <variation>G</variation>
    <location>
        <position position="880"/>
    </location>
</feature>
<feature type="sequence conflict" description="In Ref. 5; AC010543." evidence="20" ref="5">
    <original>I</original>
    <variation>V</variation>
    <location>
        <position position="128"/>
    </location>
</feature>
<feature type="sequence conflict" description="In Ref. 2; AAB63387 and 1; AAA65619/AAA65620." evidence="20" ref="2 1">
    <original>QQ</original>
    <variation>HE</variation>
    <location>
        <begin position="1148"/>
        <end position="1149"/>
    </location>
</feature>
<feature type="sequence conflict" description="In Ref. 2; AAB63387 and 1; AAA65619/AAA65620." evidence="20" ref="2 1">
    <original>RP</original>
    <variation>SC</variation>
    <location>
        <begin position="1207"/>
        <end position="1208"/>
    </location>
</feature>
<feature type="helix" evidence="30">
    <location>
        <begin position="566"/>
        <end position="574"/>
    </location>
</feature>
<feature type="turn" evidence="26">
    <location>
        <begin position="650"/>
        <end position="652"/>
    </location>
</feature>
<feature type="helix" evidence="26">
    <location>
        <begin position="654"/>
        <end position="679"/>
    </location>
</feature>
<feature type="strand" evidence="26">
    <location>
        <begin position="685"/>
        <end position="687"/>
    </location>
</feature>
<feature type="helix" evidence="26">
    <location>
        <begin position="688"/>
        <end position="707"/>
    </location>
</feature>
<feature type="helix" evidence="26">
    <location>
        <begin position="710"/>
        <end position="712"/>
    </location>
</feature>
<feature type="strand" evidence="26">
    <location>
        <begin position="715"/>
        <end position="717"/>
    </location>
</feature>
<feature type="strand" evidence="26">
    <location>
        <begin position="720"/>
        <end position="722"/>
    </location>
</feature>
<feature type="helix" evidence="26">
    <location>
        <begin position="725"/>
        <end position="734"/>
    </location>
</feature>
<feature type="helix" evidence="26">
    <location>
        <begin position="736"/>
        <end position="745"/>
    </location>
</feature>
<feature type="helix" evidence="26">
    <location>
        <begin position="759"/>
        <end position="767"/>
    </location>
</feature>
<feature type="helix" evidence="26">
    <location>
        <begin position="770"/>
        <end position="782"/>
    </location>
</feature>
<feature type="strand" evidence="26">
    <location>
        <begin position="783"/>
        <end position="785"/>
    </location>
</feature>
<feature type="helix" evidence="26">
    <location>
        <begin position="787"/>
        <end position="816"/>
    </location>
</feature>
<feature type="strand" evidence="26">
    <location>
        <begin position="820"/>
        <end position="824"/>
    </location>
</feature>
<feature type="strand" evidence="29">
    <location>
        <begin position="829"/>
        <end position="832"/>
    </location>
</feature>
<feature type="helix" evidence="26">
    <location>
        <begin position="833"/>
        <end position="843"/>
    </location>
</feature>
<feature type="helix" evidence="26">
    <location>
        <begin position="855"/>
        <end position="886"/>
    </location>
</feature>
<feature type="helix" evidence="26">
    <location>
        <begin position="888"/>
        <end position="906"/>
    </location>
</feature>
<feature type="helix" evidence="26">
    <location>
        <begin position="911"/>
        <end position="928"/>
    </location>
</feature>
<feature type="strand" evidence="26">
    <location>
        <begin position="929"/>
        <end position="931"/>
    </location>
</feature>
<feature type="helix" evidence="26">
    <location>
        <begin position="933"/>
        <end position="939"/>
    </location>
</feature>
<feature type="helix" evidence="26">
    <location>
        <begin position="942"/>
        <end position="959"/>
    </location>
</feature>
<feature type="helix" evidence="26">
    <location>
        <begin position="961"/>
        <end position="963"/>
    </location>
</feature>
<feature type="helix" evidence="26">
    <location>
        <begin position="968"/>
        <end position="977"/>
    </location>
</feature>
<feature type="strand" evidence="26">
    <location>
        <begin position="979"/>
        <end position="983"/>
    </location>
</feature>
<feature type="strand" evidence="26">
    <location>
        <begin position="988"/>
        <end position="990"/>
    </location>
</feature>
<feature type="strand" evidence="28">
    <location>
        <begin position="992"/>
        <end position="995"/>
    </location>
</feature>
<feature type="strand" evidence="26">
    <location>
        <begin position="998"/>
        <end position="1005"/>
    </location>
</feature>
<feature type="strand" evidence="26">
    <location>
        <begin position="1007"/>
        <end position="1012"/>
    </location>
</feature>
<feature type="strand" evidence="26">
    <location>
        <begin position="1017"/>
        <end position="1022"/>
    </location>
</feature>
<feature type="strand" evidence="27">
    <location>
        <begin position="1027"/>
        <end position="1029"/>
    </location>
</feature>
<feature type="helix" evidence="26">
    <location>
        <begin position="1030"/>
        <end position="1033"/>
    </location>
</feature>
<feature type="strand" evidence="26">
    <location>
        <begin position="1036"/>
        <end position="1038"/>
    </location>
</feature>
<feature type="strand" evidence="26">
    <location>
        <begin position="1046"/>
        <end position="1058"/>
    </location>
</feature>
<feature type="helix" evidence="26">
    <location>
        <begin position="1059"/>
        <end position="1066"/>
    </location>
</feature>
<feature type="helix" evidence="26">
    <location>
        <begin position="1070"/>
        <end position="1083"/>
    </location>
</feature>
<feature type="helix" evidence="29">
    <location>
        <begin position="1107"/>
        <end position="1129"/>
    </location>
</feature>
<comment type="function">
    <text evidence="1 3 4 13">Pore-forming subunit of the rod cyclic nucleotide-gated channel. Mediates rod photoresponses at dim light converting transient changes in intracellular cGMP levels into electrical signals. In the dark, cGMP levels are high and keep the channel open enabling a steady inward current carried by Na(+) and Ca(2+) ions that leads to membrane depolarization and neurotransmitter release from synaptic terminals. Upon photon absorption cGMP levels decline leading to channel closure and membrane hyperpolarization that ultimately slows neurotransmitter release and signals the presence of light, the end point of the phototransduction cascade (By similarity) (PubMed:34699778). Pore-forming subunit of the olfactory cyclic nucleotide-gated channel. Operates in the cilia of olfactory sensory neurons where chemical stimulation of the odorant is converted to an electrical signal. Mediates odorant-induced cAMP-dependent Ca(2+) influx triggering neuron depolarization. The rise of intracellular Ca(2+) levels potentiates the olfactory response by activating Ca(2+)-dependent Cl(-) channels, but it also serves as a negative feedback signal to desensitize the channel for rapid adaptation to odorants (By similarity). Conducts cGMP- and cAMP-gated ion currents, with permeability for monovalent and divalent cations. The selectivity for Ca(2+) over Na(+) increases with cGMP concentrations, whereas the selectivity among monovalent ions is independent of the cGMP levels (By similarity) (PubMed:34699778).</text>
</comment>
<comment type="function">
    <molecule>Isoform GARP2</molecule>
    <text evidence="9">High affinity rod photoreceptor phosphodiesterase (PDE6)-binding protein that modulates its catalytic properties: it is a regulator of spontaneous activation of rod PDE6, thereby serving to lower rod photoreceptor 'dark noise' and allowing these sensory cells to operate at the single photon detection limit.</text>
</comment>
<comment type="catalytic activity">
    <reaction evidence="3">
        <text>Ca(2+)(in) = Ca(2+)(out)</text>
        <dbReference type="Rhea" id="RHEA:29671"/>
        <dbReference type="ChEBI" id="CHEBI:29108"/>
    </reaction>
    <physiologicalReaction direction="right-to-left" evidence="2">
        <dbReference type="Rhea" id="RHEA:29673"/>
    </physiologicalReaction>
</comment>
<comment type="catalytic activity">
    <reaction evidence="3">
        <text>Na(+)(in) = Na(+)(out)</text>
        <dbReference type="Rhea" id="RHEA:34963"/>
        <dbReference type="ChEBI" id="CHEBI:29101"/>
    </reaction>
</comment>
<comment type="catalytic activity">
    <reaction evidence="1 4">
        <text>K(+)(in) = K(+)(out)</text>
        <dbReference type="Rhea" id="RHEA:29463"/>
        <dbReference type="ChEBI" id="CHEBI:29103"/>
    </reaction>
</comment>
<comment type="catalytic activity">
    <reaction evidence="3">
        <text>NH4(+)(in) = NH4(+)(out)</text>
        <dbReference type="Rhea" id="RHEA:28747"/>
        <dbReference type="ChEBI" id="CHEBI:28938"/>
    </reaction>
</comment>
<comment type="catalytic activity">
    <reaction evidence="4">
        <text>Rb(+)(in) = Rb(+)(out)</text>
        <dbReference type="Rhea" id="RHEA:78547"/>
        <dbReference type="ChEBI" id="CHEBI:49847"/>
    </reaction>
</comment>
<comment type="catalytic activity">
    <reaction evidence="4">
        <text>Li(+)(in) = Li(+)(out)</text>
        <dbReference type="Rhea" id="RHEA:78551"/>
        <dbReference type="ChEBI" id="CHEBI:49713"/>
    </reaction>
</comment>
<comment type="catalytic activity">
    <reaction evidence="3">
        <text>Cs(+)(in) = Cs(+)(out)</text>
        <dbReference type="Rhea" id="RHEA:78555"/>
        <dbReference type="ChEBI" id="CHEBI:49547"/>
    </reaction>
</comment>
<comment type="subunit">
    <text evidence="1 3 13">The rod cyclic nucleotide-gated channel is a heterotetramer composed of CNGA1 and CNGB1 subunits with 3:1 stoichiometry. CNGA1:CNGB1 channel binds Ca(2+)-bound CALM1 via CaM1 and CaM2 regions of the CNGB1 subunit; this interaction modulates the affinity of the channel for cNMPs in response to intracellular Ca(2+) levels (By similarity) (PubMed:34699778). The olfactory cyclic nucleotide-gated channel is a heterotetramer composed of CNGA2, CNGA4 and CNGB1 subunits with 2:1:1 stoichiometry (By similarity).</text>
</comment>
<comment type="interaction">
    <interactant intactId="EBI-7959609">
        <id>Q14028</id>
    </interactant>
    <interactant intactId="EBI-7639273">
        <id>Q5ICW4</id>
        <label>GRB14</label>
    </interactant>
    <organismsDiffer>true</organismsDiffer>
    <experiments>2</experiments>
</comment>
<comment type="subcellular location">
    <subcellularLocation>
        <location evidence="1">Cell membrane</location>
        <topology evidence="5">Multi-pass membrane protein</topology>
    </subcellularLocation>
    <subcellularLocation>
        <location evidence="1 2">Cell projection</location>
        <location evidence="1 2">Cilium membrane</location>
        <topology evidence="5">Multi-pass membrane protein</topology>
    </subcellularLocation>
</comment>
<comment type="alternative products">
    <event type="alternative splicing"/>
    <isoform>
        <id>Q14028-1</id>
        <name>RCNC2B</name>
        <sequence type="displayed"/>
    </isoform>
    <isoform>
        <id>Q14028-2</id>
        <name>RCNC2A</name>
        <sequence type="described" ref="VSP_001110"/>
    </isoform>
    <isoform>
        <id>Q14028-3</id>
        <name>GARP2</name>
        <name>GARP</name>
        <sequence type="described" ref="VSP_037921 VSP_037922"/>
    </isoform>
    <isoform>
        <id>Q14028-4</id>
        <name>4</name>
        <sequence type="described" ref="VSP_053421"/>
    </isoform>
    <text>There is no evidence for an ortholog to bovine GARP1 in the human genome.</text>
</comment>
<comment type="domain">
    <text evidence="13">The cyclic nucleotide-binding domain (CNBD) comprises three helices and a beta-roll of eight beta-strands from CNGA1 and CNGB1 subunits. Upon cNMP binding transmits the conformational changes to the C-linker domain of the S6 helix to open the ion conduction pathway.</text>
</comment>
<comment type="domain">
    <text evidence="13">The ion conduction pathway consists of S5, S6 and pore helices from CNGA1 and CNGB1 subunits. It contains a central hydrophobic gate that opens upon cNMP binding. CNGB1 displays an additional charged arginine gate below the central gate to regulate ion permeation.</text>
</comment>
<comment type="disease" evidence="7 10 11 12">
    <disease id="DI-02264">
        <name>Retinitis pigmentosa 45</name>
        <acronym>RP45</acronym>
        <description>A retinal dystrophy belonging to the group of pigmentary retinopathies. Retinitis pigmentosa is characterized by retinal pigment deposits visible on fundus examination and primary loss of rod photoreceptor cells followed by secondary loss of cone photoreceptors. Patients typically have night vision blindness and loss of midperipheral visual field. As their condition progresses, they lose their far peripheral visual field and eventually central vision as well.</description>
        <dbReference type="MIM" id="613767"/>
    </disease>
    <text>The disease is caused by variants affecting the gene represented in this entry.</text>
</comment>
<comment type="miscellaneous">
    <molecule>Isoform GARP2</molecule>
    <text evidence="20">In the rod cells, the CNGB1 locus encodes the cyclic nucleotide-gated cation channel beta-1 subunit and several glutamic-acid-rich proteins (GARPs).</text>
</comment>
<comment type="similarity">
    <text evidence="20">Belongs to the cyclic nucleotide-gated cation channel (TC 1.A.1.5) family. CNGB1 subfamily.</text>
</comment>
<protein>
    <recommendedName>
        <fullName>Cyclic nucleotide-gated channel beta-1</fullName>
        <shortName>CNG channel beta-1</shortName>
    </recommendedName>
    <alternativeName>
        <fullName>Cyclic nucleotide-gated cation channel 4</fullName>
        <shortName>CNG channel 4</shortName>
        <shortName>CNG-4</shortName>
        <shortName evidence="17">CNG4</shortName>
    </alternativeName>
    <alternativeName>
        <fullName>Cyclic nucleotide-gated cation channel gamma</fullName>
    </alternativeName>
    <alternativeName>
        <fullName>Cyclic nucleotide-gated cation channel modulatory subunit</fullName>
    </alternativeName>
    <alternativeName>
        <fullName>Glutamic acid-rich protein</fullName>
        <shortName>GARP</shortName>
    </alternativeName>
</protein>
<gene>
    <name evidence="18" type="primary">CNGB1</name>
    <name type="synonym">CNCG2</name>
    <name type="synonym">CNCG3L</name>
    <name type="synonym">CNCG4</name>
    <name evidence="17" type="synonym">RCNC2</name>
</gene>
<dbReference type="EMBL" id="L15296">
    <property type="protein sequence ID" value="AAA65620.1"/>
    <property type="molecule type" value="Genomic_DNA"/>
</dbReference>
<dbReference type="EMBL" id="L15297">
    <property type="protein sequence ID" value="AAA65619.1"/>
    <property type="molecule type" value="Genomic_DNA"/>
</dbReference>
<dbReference type="EMBL" id="U18945">
    <property type="protein sequence ID" value="AAA91633.1"/>
    <property type="molecule type" value="mRNA"/>
</dbReference>
<dbReference type="EMBL" id="U58837">
    <property type="protein sequence ID" value="AAB63387.1"/>
    <property type="molecule type" value="mRNA"/>
</dbReference>
<dbReference type="EMBL" id="AF042498">
    <property type="protein sequence ID" value="AAC04830.1"/>
    <property type="molecule type" value="mRNA"/>
</dbReference>
<dbReference type="EMBL" id="AC010543">
    <property type="status" value="NOT_ANNOTATED_CDS"/>
    <property type="molecule type" value="Genomic_DNA"/>
</dbReference>
<dbReference type="EMBL" id="CH471092">
    <property type="protein sequence ID" value="EAW82957.1"/>
    <property type="molecule type" value="Genomic_DNA"/>
</dbReference>
<dbReference type="CCDS" id="CCDS42169.1">
    <molecule id="Q14028-1"/>
</dbReference>
<dbReference type="CCDS" id="CCDS45495.1">
    <molecule id="Q14028-3"/>
</dbReference>
<dbReference type="CCDS" id="CCDS67042.1">
    <molecule id="Q14028-4"/>
</dbReference>
<dbReference type="PIR" id="A57652">
    <property type="entry name" value="A57652"/>
</dbReference>
<dbReference type="PIR" id="S32538">
    <property type="entry name" value="S32538"/>
</dbReference>
<dbReference type="PIR" id="S69275">
    <property type="entry name" value="S69275"/>
</dbReference>
<dbReference type="RefSeq" id="NP_001129111.1">
    <molecule id="Q14028-3"/>
    <property type="nucleotide sequence ID" value="NM_001135639.2"/>
</dbReference>
<dbReference type="RefSeq" id="NP_001273059.1">
    <molecule id="Q14028-4"/>
    <property type="nucleotide sequence ID" value="NM_001286130.2"/>
</dbReference>
<dbReference type="RefSeq" id="NP_001288.3">
    <molecule id="Q14028-1"/>
    <property type="nucleotide sequence ID" value="NM_001297.5"/>
</dbReference>
<dbReference type="PDB" id="7RH9">
    <property type="method" value="EM"/>
    <property type="resolution" value="2.61 A"/>
    <property type="chains" value="B=454-1251"/>
</dbReference>
<dbReference type="PDB" id="7RHG">
    <property type="method" value="EM"/>
    <property type="resolution" value="2.88 A"/>
    <property type="chains" value="B=454-1251"/>
</dbReference>
<dbReference type="PDB" id="7RHH">
    <property type="method" value="EM"/>
    <property type="resolution" value="3.31 A"/>
    <property type="chains" value="B=454-1251"/>
</dbReference>
<dbReference type="PDB" id="7RHI">
    <property type="method" value="EM"/>
    <property type="resolution" value="3.31 A"/>
    <property type="chains" value="B=454-1251"/>
</dbReference>
<dbReference type="PDB" id="7RHJ">
    <property type="method" value="EM"/>
    <property type="resolution" value="2.88 A"/>
    <property type="chains" value="B=454-1251"/>
</dbReference>
<dbReference type="PDB" id="7RHK">
    <property type="method" value="EM"/>
    <property type="resolution" value="3.27 A"/>
    <property type="chains" value="B=454-1251"/>
</dbReference>
<dbReference type="PDB" id="7RHL">
    <property type="method" value="EM"/>
    <property type="resolution" value="3.03 A"/>
    <property type="chains" value="B=454-1251"/>
</dbReference>
<dbReference type="PDB" id="8DGH">
    <property type="method" value="NMR"/>
    <property type="chains" value="B=1128-1139"/>
</dbReference>
<dbReference type="PDB" id="8DGK">
    <property type="method" value="NMR"/>
    <property type="chains" value="B=565-576"/>
</dbReference>
<dbReference type="PDBsum" id="7RH9"/>
<dbReference type="PDBsum" id="7RHG"/>
<dbReference type="PDBsum" id="7RHH"/>
<dbReference type="PDBsum" id="7RHI"/>
<dbReference type="PDBsum" id="7RHJ"/>
<dbReference type="PDBsum" id="7RHK"/>
<dbReference type="PDBsum" id="7RHL"/>
<dbReference type="PDBsum" id="8DGH"/>
<dbReference type="PDBsum" id="8DGK"/>
<dbReference type="EMDB" id="EMD-24458"/>
<dbReference type="EMDB" id="EMD-24460"/>
<dbReference type="EMDB" id="EMD-24461"/>
<dbReference type="EMDB" id="EMD-24462"/>
<dbReference type="EMDB" id="EMD-24463"/>
<dbReference type="EMDB" id="EMD-24464"/>
<dbReference type="EMDB" id="EMD-24465"/>
<dbReference type="SMR" id="Q14028"/>
<dbReference type="BioGRID" id="107658">
    <property type="interactions" value="5"/>
</dbReference>
<dbReference type="FunCoup" id="Q14028">
    <property type="interactions" value="890"/>
</dbReference>
<dbReference type="IntAct" id="Q14028">
    <property type="interactions" value="2"/>
</dbReference>
<dbReference type="MINT" id="Q14028"/>
<dbReference type="STRING" id="9606.ENSP00000251102"/>
<dbReference type="TCDB" id="1.A.1.5.3">
    <property type="family name" value="the voltage-gated ion channel (vic) superfamily"/>
</dbReference>
<dbReference type="GlyGen" id="Q14028">
    <property type="glycosylation" value="1 site, 1 O-linked glycan (1 site)"/>
</dbReference>
<dbReference type="iPTMnet" id="Q14028"/>
<dbReference type="PhosphoSitePlus" id="Q14028"/>
<dbReference type="BioMuta" id="CNGB1"/>
<dbReference type="DMDM" id="257051004"/>
<dbReference type="jPOST" id="Q14028"/>
<dbReference type="MassIVE" id="Q14028"/>
<dbReference type="PaxDb" id="9606-ENSP00000251102"/>
<dbReference type="PeptideAtlas" id="Q14028"/>
<dbReference type="ProteomicsDB" id="41062"/>
<dbReference type="ProteomicsDB" id="59797">
    <molecule id="Q14028-1"/>
</dbReference>
<dbReference type="ProteomicsDB" id="59798">
    <molecule id="Q14028-2"/>
</dbReference>
<dbReference type="ProteomicsDB" id="59799">
    <molecule id="Q14028-3"/>
</dbReference>
<dbReference type="Antibodypedia" id="48567">
    <property type="antibodies" value="106 antibodies from 21 providers"/>
</dbReference>
<dbReference type="DNASU" id="1258"/>
<dbReference type="Ensembl" id="ENST00000251102.13">
    <molecule id="Q14028-1"/>
    <property type="protein sequence ID" value="ENSP00000251102.8"/>
    <property type="gene ID" value="ENSG00000070729.14"/>
</dbReference>
<dbReference type="Ensembl" id="ENST00000311183.8">
    <molecule id="Q14028-3"/>
    <property type="protein sequence ID" value="ENSP00000311670.4"/>
    <property type="gene ID" value="ENSG00000070729.14"/>
</dbReference>
<dbReference type="Ensembl" id="ENST00000564448.5">
    <molecule id="Q14028-4"/>
    <property type="protein sequence ID" value="ENSP00000454633.1"/>
    <property type="gene ID" value="ENSG00000070729.14"/>
</dbReference>
<dbReference type="GeneID" id="1258"/>
<dbReference type="KEGG" id="hsa:1258"/>
<dbReference type="MANE-Select" id="ENST00000251102.13">
    <property type="protein sequence ID" value="ENSP00000251102.8"/>
    <property type="RefSeq nucleotide sequence ID" value="NM_001297.5"/>
    <property type="RefSeq protein sequence ID" value="NP_001288.3"/>
</dbReference>
<dbReference type="UCSC" id="uc002emt.3">
    <molecule id="Q14028-1"/>
    <property type="organism name" value="human"/>
</dbReference>
<dbReference type="AGR" id="HGNC:2151"/>
<dbReference type="CTD" id="1258"/>
<dbReference type="DisGeNET" id="1258"/>
<dbReference type="GeneCards" id="CNGB1"/>
<dbReference type="GeneReviews" id="CNGB1"/>
<dbReference type="HGNC" id="HGNC:2151">
    <property type="gene designation" value="CNGB1"/>
</dbReference>
<dbReference type="HPA" id="ENSG00000070729">
    <property type="expression patterns" value="Tissue enriched (retina)"/>
</dbReference>
<dbReference type="MalaCards" id="CNGB1"/>
<dbReference type="MIM" id="600724">
    <property type="type" value="gene"/>
</dbReference>
<dbReference type="MIM" id="613767">
    <property type="type" value="phenotype"/>
</dbReference>
<dbReference type="neXtProt" id="NX_Q14028"/>
<dbReference type="OpenTargets" id="ENSG00000070729"/>
<dbReference type="Orphanet" id="791">
    <property type="disease" value="Retinitis pigmentosa"/>
</dbReference>
<dbReference type="PharmGKB" id="PA26662"/>
<dbReference type="VEuPathDB" id="HostDB:ENSG00000070729"/>
<dbReference type="eggNOG" id="KOG0499">
    <property type="taxonomic scope" value="Eukaryota"/>
</dbReference>
<dbReference type="GeneTree" id="ENSGT00940000154824"/>
<dbReference type="HOGENOM" id="CLU_005746_11_0_1"/>
<dbReference type="InParanoid" id="Q14028"/>
<dbReference type="OMA" id="YWASAFE"/>
<dbReference type="OrthoDB" id="421226at2759"/>
<dbReference type="PAN-GO" id="Q14028">
    <property type="GO annotations" value="9 GO annotations based on evolutionary models"/>
</dbReference>
<dbReference type="PhylomeDB" id="Q14028"/>
<dbReference type="TreeFam" id="TF318250"/>
<dbReference type="PathwayCommons" id="Q14028"/>
<dbReference type="Reactome" id="R-HSA-2485179">
    <property type="pathway name" value="Activation of the phototransduction cascade"/>
</dbReference>
<dbReference type="Reactome" id="R-HSA-2514859">
    <property type="pathway name" value="Inactivation, recovery and regulation of the phototransduction cascade"/>
</dbReference>
<dbReference type="Reactome" id="R-HSA-381753">
    <molecule id="Q14028-3"/>
    <property type="pathway name" value="Olfactory Signaling Pathway"/>
</dbReference>
<dbReference type="Reactome" id="R-HSA-5620916">
    <property type="pathway name" value="VxPx cargo-targeting to cilium"/>
</dbReference>
<dbReference type="SignaLink" id="Q14028"/>
<dbReference type="BioGRID-ORCS" id="1258">
    <property type="hits" value="15 hits in 1142 CRISPR screens"/>
</dbReference>
<dbReference type="ChiTaRS" id="CNGB1">
    <property type="organism name" value="human"/>
</dbReference>
<dbReference type="GeneWiki" id="CNGB1"/>
<dbReference type="GenomeRNAi" id="1258"/>
<dbReference type="Pharos" id="Q14028">
    <property type="development level" value="Tbio"/>
</dbReference>
<dbReference type="PRO" id="PR:Q14028"/>
<dbReference type="Proteomes" id="UP000005640">
    <property type="component" value="Chromosome 16"/>
</dbReference>
<dbReference type="RNAct" id="Q14028">
    <property type="molecule type" value="protein"/>
</dbReference>
<dbReference type="Bgee" id="ENSG00000070729">
    <property type="expression patterns" value="Expressed in buccal mucosa cell and 136 other cell types or tissues"/>
</dbReference>
<dbReference type="ExpressionAtlas" id="Q14028">
    <property type="expression patterns" value="baseline and differential"/>
</dbReference>
<dbReference type="GO" id="GO:0060170">
    <property type="term" value="C:ciliary membrane"/>
    <property type="evidence" value="ECO:0000304"/>
    <property type="project" value="Reactome"/>
</dbReference>
<dbReference type="GO" id="GO:0030660">
    <property type="term" value="C:Golgi-associated vesicle membrane"/>
    <property type="evidence" value="ECO:0000304"/>
    <property type="project" value="Reactome"/>
</dbReference>
<dbReference type="GO" id="GO:0017071">
    <property type="term" value="C:intracellular cyclic nucleotide activated cation channel complex"/>
    <property type="evidence" value="ECO:0000318"/>
    <property type="project" value="GO_Central"/>
</dbReference>
<dbReference type="GO" id="GO:0098804">
    <property type="term" value="C:non-motile cilium membrane"/>
    <property type="evidence" value="ECO:0000250"/>
    <property type="project" value="UniProtKB"/>
</dbReference>
<dbReference type="GO" id="GO:0001750">
    <property type="term" value="C:photoreceptor outer segment"/>
    <property type="evidence" value="ECO:0000318"/>
    <property type="project" value="GO_Central"/>
</dbReference>
<dbReference type="GO" id="GO:0005886">
    <property type="term" value="C:plasma membrane"/>
    <property type="evidence" value="ECO:0000318"/>
    <property type="project" value="GO_Central"/>
</dbReference>
<dbReference type="GO" id="GO:0120200">
    <property type="term" value="C:rod photoreceptor outer segment"/>
    <property type="evidence" value="ECO:0000250"/>
    <property type="project" value="UniProtKB"/>
</dbReference>
<dbReference type="GO" id="GO:0043195">
    <property type="term" value="C:terminal bouton"/>
    <property type="evidence" value="ECO:0007669"/>
    <property type="project" value="Ensembl"/>
</dbReference>
<dbReference type="GO" id="GO:1902495">
    <property type="term" value="C:transmembrane transporter complex"/>
    <property type="evidence" value="ECO:0000314"/>
    <property type="project" value="UniProtKB"/>
</dbReference>
<dbReference type="GO" id="GO:0005262">
    <property type="term" value="F:calcium channel activity"/>
    <property type="evidence" value="ECO:0007669"/>
    <property type="project" value="UniProtKB-KW"/>
</dbReference>
<dbReference type="GO" id="GO:0030552">
    <property type="term" value="F:cAMP binding"/>
    <property type="evidence" value="ECO:0000314"/>
    <property type="project" value="UniProtKB"/>
</dbReference>
<dbReference type="GO" id="GO:0030553">
    <property type="term" value="F:cGMP binding"/>
    <property type="evidence" value="ECO:0000314"/>
    <property type="project" value="UniProtKB"/>
</dbReference>
<dbReference type="GO" id="GO:0005222">
    <property type="term" value="F:intracellularly cAMP-activated cation channel activity"/>
    <property type="evidence" value="ECO:0000314"/>
    <property type="project" value="UniProtKB"/>
</dbReference>
<dbReference type="GO" id="GO:0005223">
    <property type="term" value="F:intracellularly cGMP-activated cation channel activity"/>
    <property type="evidence" value="ECO:0000314"/>
    <property type="project" value="UniProtKB"/>
</dbReference>
<dbReference type="GO" id="GO:0015276">
    <property type="term" value="F:ligand-gated monoatomic ion channel activity"/>
    <property type="evidence" value="ECO:0000304"/>
    <property type="project" value="ProtInc"/>
</dbReference>
<dbReference type="GO" id="GO:0044877">
    <property type="term" value="F:protein-containing complex binding"/>
    <property type="evidence" value="ECO:0000318"/>
    <property type="project" value="GO_Central"/>
</dbReference>
<dbReference type="GO" id="GO:0005272">
    <property type="term" value="F:sodium channel activity"/>
    <property type="evidence" value="ECO:0007669"/>
    <property type="project" value="UniProtKB-KW"/>
</dbReference>
<dbReference type="GO" id="GO:0006816">
    <property type="term" value="P:calcium ion transport"/>
    <property type="evidence" value="ECO:0000250"/>
    <property type="project" value="UniProtKB"/>
</dbReference>
<dbReference type="GO" id="GO:0050911">
    <property type="term" value="P:detection of chemical stimulus involved in sensory perception of smell"/>
    <property type="evidence" value="ECO:0000250"/>
    <property type="project" value="ARUK-UCL"/>
</dbReference>
<dbReference type="GO" id="GO:0050908">
    <property type="term" value="P:detection of light stimulus involved in visual perception"/>
    <property type="evidence" value="ECO:0000315"/>
    <property type="project" value="UniProtKB"/>
</dbReference>
<dbReference type="GO" id="GO:0007186">
    <property type="term" value="P:G protein-coupled receptor signaling pathway"/>
    <property type="evidence" value="ECO:0000250"/>
    <property type="project" value="ARUK-UCL"/>
</dbReference>
<dbReference type="GO" id="GO:0051899">
    <property type="term" value="P:membrane depolarization"/>
    <property type="evidence" value="ECO:0000250"/>
    <property type="project" value="ARUK-UCL"/>
</dbReference>
<dbReference type="GO" id="GO:0098655">
    <property type="term" value="P:monoatomic cation transmembrane transport"/>
    <property type="evidence" value="ECO:0000318"/>
    <property type="project" value="GO_Central"/>
</dbReference>
<dbReference type="GO" id="GO:0006812">
    <property type="term" value="P:monoatomic cation transport"/>
    <property type="evidence" value="ECO:0000314"/>
    <property type="project" value="UniProtKB"/>
</dbReference>
<dbReference type="GO" id="GO:0021630">
    <property type="term" value="P:olfactory nerve maturation"/>
    <property type="evidence" value="ECO:0000250"/>
    <property type="project" value="ARUK-UCL"/>
</dbReference>
<dbReference type="GO" id="GO:0045494">
    <property type="term" value="P:photoreceptor cell maintenance"/>
    <property type="evidence" value="ECO:0007669"/>
    <property type="project" value="Ensembl"/>
</dbReference>
<dbReference type="GO" id="GO:0035845">
    <property type="term" value="P:photoreceptor cell outer segment organization"/>
    <property type="evidence" value="ECO:0007669"/>
    <property type="project" value="Ensembl"/>
</dbReference>
<dbReference type="GO" id="GO:0007602">
    <property type="term" value="P:phototransduction"/>
    <property type="evidence" value="ECO:0007669"/>
    <property type="project" value="Ensembl"/>
</dbReference>
<dbReference type="GO" id="GO:0010628">
    <property type="term" value="P:positive regulation of gene expression"/>
    <property type="evidence" value="ECO:0007669"/>
    <property type="project" value="Ensembl"/>
</dbReference>
<dbReference type="GO" id="GO:0006813">
    <property type="term" value="P:potassium ion transport"/>
    <property type="evidence" value="ECO:0000250"/>
    <property type="project" value="UniProtKB"/>
</dbReference>
<dbReference type="GO" id="GO:0033365">
    <property type="term" value="P:protein localization to organelle"/>
    <property type="evidence" value="ECO:0007669"/>
    <property type="project" value="Ensembl"/>
</dbReference>
<dbReference type="GO" id="GO:0051480">
    <property type="term" value="P:regulation of cytosolic calcium ion concentration"/>
    <property type="evidence" value="ECO:0007669"/>
    <property type="project" value="Ensembl"/>
</dbReference>
<dbReference type="GO" id="GO:1990834">
    <property type="term" value="P:response to odorant"/>
    <property type="evidence" value="ECO:0000250"/>
    <property type="project" value="ARUK-UCL"/>
</dbReference>
<dbReference type="GO" id="GO:0001895">
    <property type="term" value="P:retina homeostasis"/>
    <property type="evidence" value="ECO:0000315"/>
    <property type="project" value="UniProtKB"/>
</dbReference>
<dbReference type="GO" id="GO:0007608">
    <property type="term" value="P:sensory perception of smell"/>
    <property type="evidence" value="ECO:0000250"/>
    <property type="project" value="UniProtKB"/>
</dbReference>
<dbReference type="GO" id="GO:0006814">
    <property type="term" value="P:sodium ion transport"/>
    <property type="evidence" value="ECO:0000250"/>
    <property type="project" value="UniProtKB"/>
</dbReference>
<dbReference type="GO" id="GO:0007601">
    <property type="term" value="P:visual perception"/>
    <property type="evidence" value="ECO:0000250"/>
    <property type="project" value="UniProtKB"/>
</dbReference>
<dbReference type="CDD" id="cd00038">
    <property type="entry name" value="CAP_ED"/>
    <property type="match status" value="1"/>
</dbReference>
<dbReference type="FunFam" id="1.10.287.70:FF:000072">
    <property type="entry name" value="Cyclic nucleotide gated channel beta 3"/>
    <property type="match status" value="1"/>
</dbReference>
<dbReference type="FunFam" id="1.10.287.630:FF:000001">
    <property type="entry name" value="Cyclic nucleotide-gated channel alpha 3"/>
    <property type="match status" value="1"/>
</dbReference>
<dbReference type="FunFam" id="2.60.120.10:FF:000020">
    <property type="entry name" value="Cyclic nucleotide-gated channel beta 3"/>
    <property type="match status" value="1"/>
</dbReference>
<dbReference type="Gene3D" id="1.10.287.70">
    <property type="match status" value="1"/>
</dbReference>
<dbReference type="Gene3D" id="1.10.287.630">
    <property type="entry name" value="Helix hairpin bin"/>
    <property type="match status" value="1"/>
</dbReference>
<dbReference type="Gene3D" id="2.60.120.10">
    <property type="entry name" value="Jelly Rolls"/>
    <property type="match status" value="1"/>
</dbReference>
<dbReference type="InterPro" id="IPR050866">
    <property type="entry name" value="CNG_cation_channel"/>
</dbReference>
<dbReference type="InterPro" id="IPR018488">
    <property type="entry name" value="cNMP-bd_CS"/>
</dbReference>
<dbReference type="InterPro" id="IPR000595">
    <property type="entry name" value="cNMP-bd_dom"/>
</dbReference>
<dbReference type="InterPro" id="IPR018490">
    <property type="entry name" value="cNMP-bd_dom_sf"/>
</dbReference>
<dbReference type="InterPro" id="IPR014710">
    <property type="entry name" value="RmlC-like_jellyroll"/>
</dbReference>
<dbReference type="PANTHER" id="PTHR45638:SF16">
    <property type="entry name" value="CYCLIC NUCLEOTIDE-GATED CATION CHANNEL BETA-1"/>
    <property type="match status" value="1"/>
</dbReference>
<dbReference type="PANTHER" id="PTHR45638">
    <property type="entry name" value="CYCLIC NUCLEOTIDE-GATED CATION CHANNEL SUBUNIT A"/>
    <property type="match status" value="1"/>
</dbReference>
<dbReference type="Pfam" id="PF00027">
    <property type="entry name" value="cNMP_binding"/>
    <property type="match status" value="1"/>
</dbReference>
<dbReference type="SMART" id="SM00100">
    <property type="entry name" value="cNMP"/>
    <property type="match status" value="1"/>
</dbReference>
<dbReference type="SUPFAM" id="SSF51206">
    <property type="entry name" value="cAMP-binding domain-like"/>
    <property type="match status" value="1"/>
</dbReference>
<dbReference type="SUPFAM" id="SSF81324">
    <property type="entry name" value="Voltage-gated potassium channels"/>
    <property type="match status" value="1"/>
</dbReference>
<dbReference type="PROSITE" id="PS00888">
    <property type="entry name" value="CNMP_BINDING_1"/>
    <property type="match status" value="1"/>
</dbReference>
<dbReference type="PROSITE" id="PS00889">
    <property type="entry name" value="CNMP_BINDING_2"/>
    <property type="match status" value="1"/>
</dbReference>
<dbReference type="PROSITE" id="PS50042">
    <property type="entry name" value="CNMP_BINDING_3"/>
    <property type="match status" value="1"/>
</dbReference>
<organism>
    <name type="scientific">Homo sapiens</name>
    <name type="common">Human</name>
    <dbReference type="NCBI Taxonomy" id="9606"/>
    <lineage>
        <taxon>Eukaryota</taxon>
        <taxon>Metazoa</taxon>
        <taxon>Chordata</taxon>
        <taxon>Craniata</taxon>
        <taxon>Vertebrata</taxon>
        <taxon>Euteleostomi</taxon>
        <taxon>Mammalia</taxon>
        <taxon>Eutheria</taxon>
        <taxon>Euarchontoglires</taxon>
        <taxon>Primates</taxon>
        <taxon>Haplorrhini</taxon>
        <taxon>Catarrhini</taxon>
        <taxon>Hominidae</taxon>
        <taxon>Homo</taxon>
    </lineage>
</organism>
<evidence type="ECO:0000250" key="1">
    <source>
        <dbReference type="UniProtKB" id="A0A8I5ZN27"/>
    </source>
</evidence>
<evidence type="ECO:0000250" key="2">
    <source>
        <dbReference type="UniProtKB" id="E1AZ71"/>
    </source>
</evidence>
<evidence type="ECO:0000250" key="3">
    <source>
        <dbReference type="UniProtKB" id="Q28181"/>
    </source>
</evidence>
<evidence type="ECO:0000250" key="4">
    <source>
        <dbReference type="UniProtKB" id="Q9NQW8"/>
    </source>
</evidence>
<evidence type="ECO:0000255" key="5"/>
<evidence type="ECO:0000256" key="6">
    <source>
        <dbReference type="SAM" id="MobiDB-lite"/>
    </source>
</evidence>
<evidence type="ECO:0000269" key="7">
    <source>
    </source>
</evidence>
<evidence type="ECO:0000269" key="8">
    <source>
    </source>
</evidence>
<evidence type="ECO:0000269" key="9">
    <source>
    </source>
</evidence>
<evidence type="ECO:0000269" key="10">
    <source>
    </source>
</evidence>
<evidence type="ECO:0000269" key="11">
    <source>
    </source>
</evidence>
<evidence type="ECO:0000269" key="12">
    <source>
    </source>
</evidence>
<evidence type="ECO:0000269" key="13">
    <source>
    </source>
</evidence>
<evidence type="ECO:0000269" key="14">
    <source>
    </source>
</evidence>
<evidence type="ECO:0000269" key="15">
    <source>
    </source>
</evidence>
<evidence type="ECO:0000269" key="16">
    <source>
    </source>
</evidence>
<evidence type="ECO:0000303" key="17">
    <source>
    </source>
</evidence>
<evidence type="ECO:0000303" key="18">
    <source>
    </source>
</evidence>
<evidence type="ECO:0000303" key="19">
    <source>
    </source>
</evidence>
<evidence type="ECO:0000305" key="20"/>
<evidence type="ECO:0000305" key="21">
    <source>
    </source>
</evidence>
<evidence type="ECO:0007744" key="22">
    <source>
        <dbReference type="PDB" id="7RH9"/>
    </source>
</evidence>
<evidence type="ECO:0007744" key="23">
    <source>
        <dbReference type="PDB" id="7RHG"/>
    </source>
</evidence>
<evidence type="ECO:0007744" key="24">
    <source>
        <dbReference type="PDB" id="7RHH"/>
    </source>
</evidence>
<evidence type="ECO:0007744" key="25">
    <source>
        <dbReference type="PDB" id="7RHI"/>
    </source>
</evidence>
<evidence type="ECO:0007829" key="26">
    <source>
        <dbReference type="PDB" id="7RH9"/>
    </source>
</evidence>
<evidence type="ECO:0007829" key="27">
    <source>
        <dbReference type="PDB" id="7RHI"/>
    </source>
</evidence>
<evidence type="ECO:0007829" key="28">
    <source>
        <dbReference type="PDB" id="7RHJ"/>
    </source>
</evidence>
<evidence type="ECO:0007829" key="29">
    <source>
        <dbReference type="PDB" id="7RHL"/>
    </source>
</evidence>
<evidence type="ECO:0007829" key="30">
    <source>
        <dbReference type="PDB" id="8DGK"/>
    </source>
</evidence>
<accession>Q14028</accession>
<accession>H3BN09</accession>
<accession>O43636</accession>
<accession>Q13059</accession>
<accession>Q14029</accession>
<accession>Q9UMG2</accession>